<protein>
    <recommendedName>
        <fullName evidence="1">DNA ligase</fullName>
        <ecNumber evidence="1">6.5.1.2</ecNumber>
    </recommendedName>
    <alternativeName>
        <fullName evidence="1">Polydeoxyribonucleotide synthase [NAD(+)]</fullName>
    </alternativeName>
    <alternativeName>
        <fullName>Tth DNA ligase</fullName>
    </alternativeName>
</protein>
<gene>
    <name evidence="1" type="primary">ligA</name>
    <name type="synonym">lig</name>
    <name type="synonym">ligT</name>
    <name type="ordered locus">TTHA1097</name>
</gene>
<accession>P26996</accession>
<accession>Q5SJB7</accession>
<name>DNLJ_THET8</name>
<sequence length="676" mass="76905">MTLEEARKRVNELRDLIRYHNYRYYVLADPEISDAEYDRLLRELKELEERFPELKSPDSPTLQVGARPLEATFRPVRHPTRMYSLDNAFNLDELKAFEERIERALGRKGPFAYTVEHKVDGLSVNLYYEEGVLVYGATRGDGEVGEEVTQNLLTIPTIPRRLKGVPERLEVRGEVYMPIEAFLRLNEELEERGERIFKNPRNAAAGSLRQKDPRITAKRGLRATFYALGLGLEEVEREGVATQFALLHWLKEKGFPVEHGYARAVGAEGVEAVYQDWLKKRRALPFEADGVVVKLDELALWRELGYTARAPRFAIAYKFPAEEKETRLLDVVFQVGRTGRVTPVGILEPVFLEGSEVSRVTLHNESYIEELDIRIGDWVLVHKAGGVIPEVLRVLKERRTGEERPIRWPETCPECGHRLLKEGKVHRCPNPLCPAKRFEAIRHFASRKAMDIQGLGEKLIERLLEKGLVKDVADLYRLRKEDLVGLERMGEKSAQNLLRQIEESKKRGLERLLYALGLPGVGEVLARNLAARFGNMDRLLEASLEELLEVEEVGELTARAILETLKDPAFRDLVRRLKEAGVEMEAKEKGGEALKGLTFVITGELSRPREEVKALLRRLGAKVTDSVSRKTSYLVVGENPGSKLEKARALGVPTLTEEELYRLLEARTGKKAEELV</sequence>
<evidence type="ECO:0000255" key="1">
    <source>
        <dbReference type="HAMAP-Rule" id="MF_01588"/>
    </source>
</evidence>
<evidence type="ECO:0007829" key="2">
    <source>
        <dbReference type="PDB" id="1L7B"/>
    </source>
</evidence>
<feature type="chain" id="PRO_0000161772" description="DNA ligase">
    <location>
        <begin position="1"/>
        <end position="676"/>
    </location>
</feature>
<feature type="domain" description="BRCT" evidence="1">
    <location>
        <begin position="589"/>
        <end position="676"/>
    </location>
</feature>
<feature type="active site" description="N6-AMP-lysine intermediate" evidence="1">
    <location>
        <position position="118"/>
    </location>
</feature>
<feature type="binding site" evidence="1">
    <location>
        <begin position="34"/>
        <end position="38"/>
    </location>
    <ligand>
        <name>NAD(+)</name>
        <dbReference type="ChEBI" id="CHEBI:57540"/>
    </ligand>
</feature>
<feature type="binding site" evidence="1">
    <location>
        <begin position="84"/>
        <end position="85"/>
    </location>
    <ligand>
        <name>NAD(+)</name>
        <dbReference type="ChEBI" id="CHEBI:57540"/>
    </ligand>
</feature>
<feature type="binding site" evidence="1">
    <location>
        <position position="116"/>
    </location>
    <ligand>
        <name>NAD(+)</name>
        <dbReference type="ChEBI" id="CHEBI:57540"/>
    </ligand>
</feature>
<feature type="binding site" evidence="1">
    <location>
        <position position="139"/>
    </location>
    <ligand>
        <name>NAD(+)</name>
        <dbReference type="ChEBI" id="CHEBI:57540"/>
    </ligand>
</feature>
<feature type="binding site" evidence="1">
    <location>
        <position position="174"/>
    </location>
    <ligand>
        <name>NAD(+)</name>
        <dbReference type="ChEBI" id="CHEBI:57540"/>
    </ligand>
</feature>
<feature type="binding site" evidence="1">
    <location>
        <position position="294"/>
    </location>
    <ligand>
        <name>NAD(+)</name>
        <dbReference type="ChEBI" id="CHEBI:57540"/>
    </ligand>
</feature>
<feature type="binding site" evidence="1">
    <location>
        <position position="318"/>
    </location>
    <ligand>
        <name>NAD(+)</name>
        <dbReference type="ChEBI" id="CHEBI:57540"/>
    </ligand>
</feature>
<feature type="binding site" evidence="1">
    <location>
        <position position="412"/>
    </location>
    <ligand>
        <name>Zn(2+)</name>
        <dbReference type="ChEBI" id="CHEBI:29105"/>
    </ligand>
</feature>
<feature type="binding site" evidence="1">
    <location>
        <position position="415"/>
    </location>
    <ligand>
        <name>Zn(2+)</name>
        <dbReference type="ChEBI" id="CHEBI:29105"/>
    </ligand>
</feature>
<feature type="binding site" evidence="1">
    <location>
        <position position="428"/>
    </location>
    <ligand>
        <name>Zn(2+)</name>
        <dbReference type="ChEBI" id="CHEBI:29105"/>
    </ligand>
</feature>
<feature type="binding site" evidence="1">
    <location>
        <position position="433"/>
    </location>
    <ligand>
        <name>Zn(2+)</name>
        <dbReference type="ChEBI" id="CHEBI:29105"/>
    </ligand>
</feature>
<feature type="strand" evidence="2">
    <location>
        <begin position="598"/>
        <end position="600"/>
    </location>
</feature>
<feature type="turn" evidence="2">
    <location>
        <begin position="603"/>
        <end position="606"/>
    </location>
</feature>
<feature type="helix" evidence="2">
    <location>
        <begin position="609"/>
        <end position="618"/>
    </location>
</feature>
<feature type="strand" evidence="2">
    <location>
        <begin position="622"/>
        <end position="625"/>
    </location>
</feature>
<feature type="strand" evidence="2">
    <location>
        <begin position="628"/>
        <end position="630"/>
    </location>
</feature>
<feature type="strand" evidence="2">
    <location>
        <begin position="634"/>
        <end position="636"/>
    </location>
</feature>
<feature type="strand" evidence="2">
    <location>
        <begin position="638"/>
        <end position="641"/>
    </location>
</feature>
<feature type="helix" evidence="2">
    <location>
        <begin position="644"/>
        <end position="648"/>
    </location>
</feature>
<feature type="strand" evidence="2">
    <location>
        <begin position="650"/>
        <end position="652"/>
    </location>
</feature>
<feature type="helix" evidence="2">
    <location>
        <begin position="657"/>
        <end position="668"/>
    </location>
</feature>
<feature type="strand" evidence="2">
    <location>
        <begin position="672"/>
        <end position="674"/>
    </location>
</feature>
<proteinExistence type="evidence at protein level"/>
<organism>
    <name type="scientific">Thermus thermophilus (strain ATCC 27634 / DSM 579 / HB8)</name>
    <dbReference type="NCBI Taxonomy" id="300852"/>
    <lineage>
        <taxon>Bacteria</taxon>
        <taxon>Thermotogati</taxon>
        <taxon>Deinococcota</taxon>
        <taxon>Deinococci</taxon>
        <taxon>Thermales</taxon>
        <taxon>Thermaceae</taxon>
        <taxon>Thermus</taxon>
    </lineage>
</organism>
<dbReference type="EC" id="6.5.1.2" evidence="1"/>
<dbReference type="EMBL" id="M36417">
    <property type="protein sequence ID" value="AAA27487.1"/>
    <property type="molecule type" value="Genomic_DNA"/>
</dbReference>
<dbReference type="EMBL" id="M74792">
    <property type="protein sequence ID" value="AAA27486.1"/>
    <property type="molecule type" value="Genomic_DNA"/>
</dbReference>
<dbReference type="EMBL" id="AP008226">
    <property type="protein sequence ID" value="BAD70920.1"/>
    <property type="molecule type" value="Genomic_DNA"/>
</dbReference>
<dbReference type="RefSeq" id="WP_011228436.1">
    <property type="nucleotide sequence ID" value="NC_006461.1"/>
</dbReference>
<dbReference type="RefSeq" id="YP_144363.1">
    <property type="nucleotide sequence ID" value="NC_006461.1"/>
</dbReference>
<dbReference type="PDB" id="1L7B">
    <property type="method" value="NMR"/>
    <property type="chains" value="A=588-676"/>
</dbReference>
<dbReference type="PDBsum" id="1L7B"/>
<dbReference type="BMRB" id="P26996"/>
<dbReference type="SMR" id="P26996"/>
<dbReference type="EnsemblBacteria" id="BAD70920">
    <property type="protein sequence ID" value="BAD70920"/>
    <property type="gene ID" value="BAD70920"/>
</dbReference>
<dbReference type="GeneID" id="3168641"/>
<dbReference type="KEGG" id="ttj:TTHA1097"/>
<dbReference type="PATRIC" id="fig|300852.9.peg.1077"/>
<dbReference type="eggNOG" id="COG0272">
    <property type="taxonomic scope" value="Bacteria"/>
</dbReference>
<dbReference type="HOGENOM" id="CLU_007764_2_1_0"/>
<dbReference type="PhylomeDB" id="P26996"/>
<dbReference type="EvolutionaryTrace" id="P26996"/>
<dbReference type="Proteomes" id="UP000000532">
    <property type="component" value="Chromosome"/>
</dbReference>
<dbReference type="GO" id="GO:0005829">
    <property type="term" value="C:cytosol"/>
    <property type="evidence" value="ECO:0007669"/>
    <property type="project" value="TreeGrafter"/>
</dbReference>
<dbReference type="GO" id="GO:0003677">
    <property type="term" value="F:DNA binding"/>
    <property type="evidence" value="ECO:0007669"/>
    <property type="project" value="InterPro"/>
</dbReference>
<dbReference type="GO" id="GO:0003911">
    <property type="term" value="F:DNA ligase (NAD+) activity"/>
    <property type="evidence" value="ECO:0007669"/>
    <property type="project" value="UniProtKB-UniRule"/>
</dbReference>
<dbReference type="GO" id="GO:0046872">
    <property type="term" value="F:metal ion binding"/>
    <property type="evidence" value="ECO:0007669"/>
    <property type="project" value="UniProtKB-KW"/>
</dbReference>
<dbReference type="GO" id="GO:0006281">
    <property type="term" value="P:DNA repair"/>
    <property type="evidence" value="ECO:0007669"/>
    <property type="project" value="UniProtKB-KW"/>
</dbReference>
<dbReference type="GO" id="GO:0006260">
    <property type="term" value="P:DNA replication"/>
    <property type="evidence" value="ECO:0007669"/>
    <property type="project" value="UniProtKB-KW"/>
</dbReference>
<dbReference type="CDD" id="cd17748">
    <property type="entry name" value="BRCT_DNA_ligase_like"/>
    <property type="match status" value="1"/>
</dbReference>
<dbReference type="CDD" id="cd00114">
    <property type="entry name" value="LIGANc"/>
    <property type="match status" value="1"/>
</dbReference>
<dbReference type="FunFam" id="1.10.150.20:FF:000006">
    <property type="entry name" value="DNA ligase"/>
    <property type="match status" value="1"/>
</dbReference>
<dbReference type="FunFam" id="1.10.150.20:FF:000007">
    <property type="entry name" value="DNA ligase"/>
    <property type="match status" value="1"/>
</dbReference>
<dbReference type="FunFam" id="1.10.287.610:FF:000002">
    <property type="entry name" value="DNA ligase"/>
    <property type="match status" value="1"/>
</dbReference>
<dbReference type="FunFam" id="2.40.50.140:FF:000012">
    <property type="entry name" value="DNA ligase"/>
    <property type="match status" value="1"/>
</dbReference>
<dbReference type="FunFam" id="3.30.470.30:FF:000001">
    <property type="entry name" value="DNA ligase"/>
    <property type="match status" value="1"/>
</dbReference>
<dbReference type="Gene3D" id="6.20.10.30">
    <property type="match status" value="1"/>
</dbReference>
<dbReference type="Gene3D" id="1.10.150.20">
    <property type="entry name" value="5' to 3' exonuclease, C-terminal subdomain"/>
    <property type="match status" value="2"/>
</dbReference>
<dbReference type="Gene3D" id="3.40.50.10190">
    <property type="entry name" value="BRCT domain"/>
    <property type="match status" value="1"/>
</dbReference>
<dbReference type="Gene3D" id="3.30.470.30">
    <property type="entry name" value="DNA ligase/mRNA capping enzyme"/>
    <property type="match status" value="1"/>
</dbReference>
<dbReference type="Gene3D" id="1.10.287.610">
    <property type="entry name" value="Helix hairpin bin"/>
    <property type="match status" value="1"/>
</dbReference>
<dbReference type="Gene3D" id="2.40.50.140">
    <property type="entry name" value="Nucleic acid-binding proteins"/>
    <property type="match status" value="1"/>
</dbReference>
<dbReference type="HAMAP" id="MF_01588">
    <property type="entry name" value="DNA_ligase_A"/>
    <property type="match status" value="1"/>
</dbReference>
<dbReference type="InterPro" id="IPR001357">
    <property type="entry name" value="BRCT_dom"/>
</dbReference>
<dbReference type="InterPro" id="IPR036420">
    <property type="entry name" value="BRCT_dom_sf"/>
</dbReference>
<dbReference type="InterPro" id="IPR041663">
    <property type="entry name" value="DisA/LigA_HHH"/>
</dbReference>
<dbReference type="InterPro" id="IPR001679">
    <property type="entry name" value="DNA_ligase"/>
</dbReference>
<dbReference type="InterPro" id="IPR018239">
    <property type="entry name" value="DNA_ligase_AS"/>
</dbReference>
<dbReference type="InterPro" id="IPR033136">
    <property type="entry name" value="DNA_ligase_CS"/>
</dbReference>
<dbReference type="InterPro" id="IPR013839">
    <property type="entry name" value="DNAligase_adenylation"/>
</dbReference>
<dbReference type="InterPro" id="IPR013840">
    <property type="entry name" value="DNAligase_N"/>
</dbReference>
<dbReference type="InterPro" id="IPR003583">
    <property type="entry name" value="Hlx-hairpin-Hlx_DNA-bd_motif"/>
</dbReference>
<dbReference type="InterPro" id="IPR012340">
    <property type="entry name" value="NA-bd_OB-fold"/>
</dbReference>
<dbReference type="InterPro" id="IPR004150">
    <property type="entry name" value="NAD_DNA_ligase_OB"/>
</dbReference>
<dbReference type="InterPro" id="IPR010994">
    <property type="entry name" value="RuvA_2-like"/>
</dbReference>
<dbReference type="NCBIfam" id="TIGR00575">
    <property type="entry name" value="dnlj"/>
    <property type="match status" value="1"/>
</dbReference>
<dbReference type="NCBIfam" id="NF005932">
    <property type="entry name" value="PRK07956.1"/>
    <property type="match status" value="1"/>
</dbReference>
<dbReference type="PANTHER" id="PTHR23389">
    <property type="entry name" value="CHROMOSOME TRANSMISSION FIDELITY FACTOR 18"/>
    <property type="match status" value="1"/>
</dbReference>
<dbReference type="PANTHER" id="PTHR23389:SF9">
    <property type="entry name" value="DNA LIGASE"/>
    <property type="match status" value="1"/>
</dbReference>
<dbReference type="Pfam" id="PF00533">
    <property type="entry name" value="BRCT"/>
    <property type="match status" value="1"/>
</dbReference>
<dbReference type="Pfam" id="PF01653">
    <property type="entry name" value="DNA_ligase_aden"/>
    <property type="match status" value="1"/>
</dbReference>
<dbReference type="Pfam" id="PF03120">
    <property type="entry name" value="DNA_ligase_OB"/>
    <property type="match status" value="1"/>
</dbReference>
<dbReference type="Pfam" id="PF12826">
    <property type="entry name" value="HHH_2"/>
    <property type="match status" value="1"/>
</dbReference>
<dbReference type="Pfam" id="PF14520">
    <property type="entry name" value="HHH_5"/>
    <property type="match status" value="1"/>
</dbReference>
<dbReference type="Pfam" id="PF22745">
    <property type="entry name" value="Nlig-Ia"/>
    <property type="match status" value="1"/>
</dbReference>
<dbReference type="PIRSF" id="PIRSF001604">
    <property type="entry name" value="LigA"/>
    <property type="match status" value="1"/>
</dbReference>
<dbReference type="SMART" id="SM00292">
    <property type="entry name" value="BRCT"/>
    <property type="match status" value="1"/>
</dbReference>
<dbReference type="SMART" id="SM00278">
    <property type="entry name" value="HhH1"/>
    <property type="match status" value="4"/>
</dbReference>
<dbReference type="SMART" id="SM00532">
    <property type="entry name" value="LIGANc"/>
    <property type="match status" value="1"/>
</dbReference>
<dbReference type="SUPFAM" id="SSF52113">
    <property type="entry name" value="BRCT domain"/>
    <property type="match status" value="1"/>
</dbReference>
<dbReference type="SUPFAM" id="SSF56091">
    <property type="entry name" value="DNA ligase/mRNA capping enzyme, catalytic domain"/>
    <property type="match status" value="1"/>
</dbReference>
<dbReference type="SUPFAM" id="SSF50249">
    <property type="entry name" value="Nucleic acid-binding proteins"/>
    <property type="match status" value="1"/>
</dbReference>
<dbReference type="SUPFAM" id="SSF47781">
    <property type="entry name" value="RuvA domain 2-like"/>
    <property type="match status" value="1"/>
</dbReference>
<dbReference type="PROSITE" id="PS50172">
    <property type="entry name" value="BRCT"/>
    <property type="match status" value="1"/>
</dbReference>
<dbReference type="PROSITE" id="PS01055">
    <property type="entry name" value="DNA_LIGASE_N1"/>
    <property type="match status" value="1"/>
</dbReference>
<dbReference type="PROSITE" id="PS01056">
    <property type="entry name" value="DNA_LIGASE_N2"/>
    <property type="match status" value="1"/>
</dbReference>
<comment type="function">
    <text>DNA ligase that catalyzes the formation of phosphodiester linkages between 5'-phosphoryl and 3'-hydroxyl groups in double-stranded DNA using NAD as a coenzyme and as the energy source for the reaction. It is essential for DNA replication and repair of damaged DNA.</text>
</comment>
<comment type="catalytic activity">
    <reaction evidence="1">
        <text>NAD(+) + (deoxyribonucleotide)n-3'-hydroxyl + 5'-phospho-(deoxyribonucleotide)m = (deoxyribonucleotide)n+m + AMP + beta-nicotinamide D-nucleotide.</text>
        <dbReference type="EC" id="6.5.1.2"/>
    </reaction>
</comment>
<comment type="cofactor">
    <cofactor evidence="1">
        <name>Mg(2+)</name>
        <dbReference type="ChEBI" id="CHEBI:18420"/>
    </cofactor>
    <cofactor evidence="1">
        <name>Mn(2+)</name>
        <dbReference type="ChEBI" id="CHEBI:29035"/>
    </cofactor>
</comment>
<comment type="biophysicochemical properties">
    <temperatureDependence>
        <text>Thermostable.</text>
    </temperatureDependence>
</comment>
<comment type="similarity">
    <text evidence="1">Belongs to the NAD-dependent DNA ligase family. LigA subfamily.</text>
</comment>
<reference key="1">
    <citation type="journal article" date="1991" name="J. Bacteriol.">
        <title>Cloning, nucleotide sequence, and engineered expression of Thermus thermophilus DNA ligase, a homolog of Escherichia coli DNA ligase.</title>
        <authorList>
            <person name="Lauer G."/>
            <person name="Rudd E.A."/>
            <person name="McKay D.L."/>
            <person name="Ally A."/>
            <person name="Ally D."/>
            <person name="Backman K.C."/>
        </authorList>
    </citation>
    <scope>NUCLEOTIDE SEQUENCE [GENOMIC DNA]</scope>
</reference>
<reference key="2">
    <citation type="journal article" date="1991" name="Gene">
        <title>Cloning, overexpression and nucleotide sequence of a thermostable DNA ligase-encoding gene.</title>
        <authorList>
            <person name="Barany F."/>
            <person name="Gelfand D.H."/>
        </authorList>
    </citation>
    <scope>NUCLEOTIDE SEQUENCE [GENOMIC DNA]</scope>
</reference>
<reference key="3">
    <citation type="submission" date="2004-11" db="EMBL/GenBank/DDBJ databases">
        <title>Complete genome sequence of Thermus thermophilus HB8.</title>
        <authorList>
            <person name="Masui R."/>
            <person name="Kurokawa K."/>
            <person name="Nakagawa N."/>
            <person name="Tokunaga F."/>
            <person name="Koyama Y."/>
            <person name="Shibata T."/>
            <person name="Oshima T."/>
            <person name="Yokoyama S."/>
            <person name="Yasunaga T."/>
            <person name="Kuramitsu S."/>
        </authorList>
    </citation>
    <scope>NUCLEOTIDE SEQUENCE [LARGE SCALE GENOMIC DNA]</scope>
    <source>
        <strain>ATCC 27634 / DSM 579 / HB8</strain>
    </source>
</reference>
<reference key="4">
    <citation type="submission" date="2005-01" db="PDB data bank">
        <title>Solution NMR structure of the BRCT domain from Thermus thermophilus DNA ligase.</title>
        <authorList>
            <consortium name="Northeast structural genomics consortium (NESG)"/>
        </authorList>
    </citation>
    <scope>STRUCTURE BY NMR OF 588-676</scope>
</reference>
<keyword id="KW-0002">3D-structure</keyword>
<keyword id="KW-0227">DNA damage</keyword>
<keyword id="KW-0234">DNA repair</keyword>
<keyword id="KW-0235">DNA replication</keyword>
<keyword id="KW-0436">Ligase</keyword>
<keyword id="KW-0460">Magnesium</keyword>
<keyword id="KW-0464">Manganese</keyword>
<keyword id="KW-0479">Metal-binding</keyword>
<keyword id="KW-0520">NAD</keyword>
<keyword id="KW-1185">Reference proteome</keyword>
<keyword id="KW-0862">Zinc</keyword>